<proteinExistence type="evidence at protein level"/>
<accession>O82210</accession>
<feature type="chain" id="PRO_0000293987" description="Probable protein arginine N-methyltransferase 1.2">
    <location>
        <begin position="1"/>
        <end position="366"/>
    </location>
</feature>
<feature type="domain" description="SAM-dependent MTase PRMT-type" evidence="2">
    <location>
        <begin position="45"/>
        <end position="347"/>
    </location>
</feature>
<feature type="active site" evidence="1">
    <location>
        <position position="157"/>
    </location>
</feature>
<feature type="active site" evidence="1">
    <location>
        <position position="166"/>
    </location>
</feature>
<sequence>MTSTENNNNGSDETQTTKLHFEDADESMHDGDDNNADVADDITSADYYFDSYSHFGIHEEMLKDVVRTKSYQDVIYKNKFLIKDKIVLDVGAGTGILSLFCAKAGAAHVYAVECSQMADTAKEIVKSNGFSDVITVLKGKIEEIELPVPKVDVIISEWMGYFLLYENMLDTVLYARNKWLVDGGIVLPDKASLYVTAIEDAHYKDDKVEFWDDVYGFDMSCIKRRAITEPLVDTVDGNQIVTDSKLLKTMDISKMAAGDASFTAPFKLVAQRNDHIHALVAYFDVSFTMCHKKMGFSTGPKSRATHWKQTVLYLEDVLTICEGETITGSMTIAQNKKNPRDVDIKLSYSLNGQHCNISRTHFYKMR</sequence>
<name>ANM12_ARATH</name>
<reference key="1">
    <citation type="journal article" date="1999" name="Nature">
        <title>Sequence and analysis of chromosome 2 of the plant Arabidopsis thaliana.</title>
        <authorList>
            <person name="Lin X."/>
            <person name="Kaul S."/>
            <person name="Rounsley S.D."/>
            <person name="Shea T.P."/>
            <person name="Benito M.-I."/>
            <person name="Town C.D."/>
            <person name="Fujii C.Y."/>
            <person name="Mason T.M."/>
            <person name="Bowman C.L."/>
            <person name="Barnstead M.E."/>
            <person name="Feldblyum T.V."/>
            <person name="Buell C.R."/>
            <person name="Ketchum K.A."/>
            <person name="Lee J.J."/>
            <person name="Ronning C.M."/>
            <person name="Koo H.L."/>
            <person name="Moffat K.S."/>
            <person name="Cronin L.A."/>
            <person name="Shen M."/>
            <person name="Pai G."/>
            <person name="Van Aken S."/>
            <person name="Umayam L."/>
            <person name="Tallon L.J."/>
            <person name="Gill J.E."/>
            <person name="Adams M.D."/>
            <person name="Carrera A.J."/>
            <person name="Creasy T.H."/>
            <person name="Goodman H.M."/>
            <person name="Somerville C.R."/>
            <person name="Copenhaver G.P."/>
            <person name="Preuss D."/>
            <person name="Nierman W.C."/>
            <person name="White O."/>
            <person name="Eisen J.A."/>
            <person name="Salzberg S.L."/>
            <person name="Fraser C.M."/>
            <person name="Venter J.C."/>
        </authorList>
    </citation>
    <scope>NUCLEOTIDE SEQUENCE [LARGE SCALE GENOMIC DNA]</scope>
    <source>
        <strain>cv. Columbia</strain>
    </source>
</reference>
<reference key="2">
    <citation type="journal article" date="2017" name="Plant J.">
        <title>Araport11: a complete reannotation of the Arabidopsis thaliana reference genome.</title>
        <authorList>
            <person name="Cheng C.Y."/>
            <person name="Krishnakumar V."/>
            <person name="Chan A.P."/>
            <person name="Thibaud-Nissen F."/>
            <person name="Schobel S."/>
            <person name="Town C.D."/>
        </authorList>
    </citation>
    <scope>GENOME REANNOTATION</scope>
    <source>
        <strain>cv. Columbia</strain>
    </source>
</reference>
<reference key="3">
    <citation type="journal article" date="2003" name="Science">
        <title>Empirical analysis of transcriptional activity in the Arabidopsis genome.</title>
        <authorList>
            <person name="Yamada K."/>
            <person name="Lim J."/>
            <person name="Dale J.M."/>
            <person name="Chen H."/>
            <person name="Shinn P."/>
            <person name="Palm C.J."/>
            <person name="Southwick A.M."/>
            <person name="Wu H.C."/>
            <person name="Kim C.J."/>
            <person name="Nguyen M."/>
            <person name="Pham P.K."/>
            <person name="Cheuk R.F."/>
            <person name="Karlin-Newmann G."/>
            <person name="Liu S.X."/>
            <person name="Lam B."/>
            <person name="Sakano H."/>
            <person name="Wu T."/>
            <person name="Yu G."/>
            <person name="Miranda M."/>
            <person name="Quach H.L."/>
            <person name="Tripp M."/>
            <person name="Chang C.H."/>
            <person name="Lee J.M."/>
            <person name="Toriumi M.J."/>
            <person name="Chan M.M."/>
            <person name="Tang C.C."/>
            <person name="Onodera C.S."/>
            <person name="Deng J.M."/>
            <person name="Akiyama K."/>
            <person name="Ansari Y."/>
            <person name="Arakawa T."/>
            <person name="Banh J."/>
            <person name="Banno F."/>
            <person name="Bowser L."/>
            <person name="Brooks S.Y."/>
            <person name="Carninci P."/>
            <person name="Chao Q."/>
            <person name="Choy N."/>
            <person name="Enju A."/>
            <person name="Goldsmith A.D."/>
            <person name="Gurjal M."/>
            <person name="Hansen N.F."/>
            <person name="Hayashizaki Y."/>
            <person name="Johnson-Hopson C."/>
            <person name="Hsuan V.W."/>
            <person name="Iida K."/>
            <person name="Karnes M."/>
            <person name="Khan S."/>
            <person name="Koesema E."/>
            <person name="Ishida J."/>
            <person name="Jiang P.X."/>
            <person name="Jones T."/>
            <person name="Kawai J."/>
            <person name="Kamiya A."/>
            <person name="Meyers C."/>
            <person name="Nakajima M."/>
            <person name="Narusaka M."/>
            <person name="Seki M."/>
            <person name="Sakurai T."/>
            <person name="Satou M."/>
            <person name="Tamse R."/>
            <person name="Vaysberg M."/>
            <person name="Wallender E.K."/>
            <person name="Wong C."/>
            <person name="Yamamura Y."/>
            <person name="Yuan S."/>
            <person name="Shinozaki K."/>
            <person name="Davis R.W."/>
            <person name="Theologis A."/>
            <person name="Ecker J.R."/>
        </authorList>
    </citation>
    <scope>NUCLEOTIDE SEQUENCE [LARGE SCALE MRNA]</scope>
    <source>
        <strain>cv. Columbia</strain>
    </source>
</reference>
<reference key="4">
    <citation type="submission" date="2006-07" db="EMBL/GenBank/DDBJ databases">
        <title>Large-scale analysis of RIKEN Arabidopsis full-length (RAFL) cDNAs.</title>
        <authorList>
            <person name="Totoki Y."/>
            <person name="Seki M."/>
            <person name="Ishida J."/>
            <person name="Nakajima M."/>
            <person name="Enju A."/>
            <person name="Kamiya A."/>
            <person name="Narusaka M."/>
            <person name="Shin-i T."/>
            <person name="Nakagawa M."/>
            <person name="Sakamoto N."/>
            <person name="Oishi K."/>
            <person name="Kohara Y."/>
            <person name="Kobayashi M."/>
            <person name="Toyoda A."/>
            <person name="Sakaki Y."/>
            <person name="Sakurai T."/>
            <person name="Iida K."/>
            <person name="Akiyama K."/>
            <person name="Satou M."/>
            <person name="Toyoda T."/>
            <person name="Konagaya A."/>
            <person name="Carninci P."/>
            <person name="Kawai J."/>
            <person name="Hayashizaki Y."/>
            <person name="Shinozaki K."/>
        </authorList>
    </citation>
    <scope>NUCLEOTIDE SEQUENCE [LARGE SCALE MRNA]</scope>
    <source>
        <strain>cv. Columbia</strain>
    </source>
</reference>
<reference key="5">
    <citation type="journal article" date="2007" name="Biochem. J.">
        <title>Identification and characterization of two closely related histone H4 arginine 3 methyltransferases in Arabidopsis thaliana.</title>
        <authorList>
            <person name="Yan D."/>
            <person name="Zhang Y."/>
            <person name="Niu L."/>
            <person name="Yuan Y."/>
            <person name="Cao X."/>
        </authorList>
    </citation>
    <scope>FUNCTION</scope>
    <scope>INTERACTION WITH PRMT11 AND FIB2</scope>
    <scope>SUBCELLULAR LOCATION</scope>
</reference>
<reference key="6">
    <citation type="journal article" date="2007" name="Pharmacol. Ther.">
        <title>Protein arginine methyltransferases: evolution and assessment of their pharmacological and therapeutic potential.</title>
        <authorList>
            <person name="Krause C.D."/>
            <person name="Yang Z.-H."/>
            <person name="Kim Y.-S."/>
            <person name="Lee J.-H."/>
            <person name="Cook J.R."/>
            <person name="Pestka S."/>
        </authorList>
    </citation>
    <scope>GENE FAMILY</scope>
    <scope>NOMENCLATURE</scope>
</reference>
<dbReference type="EC" id="2.1.1.-"/>
<dbReference type="EMBL" id="AC005169">
    <property type="protein sequence ID" value="AAC62148.1"/>
    <property type="molecule type" value="Genomic_DNA"/>
</dbReference>
<dbReference type="EMBL" id="CP002685">
    <property type="protein sequence ID" value="AEC06910.1"/>
    <property type="molecule type" value="Genomic_DNA"/>
</dbReference>
<dbReference type="EMBL" id="BT006491">
    <property type="protein sequence ID" value="AAP21299.1"/>
    <property type="molecule type" value="mRNA"/>
</dbReference>
<dbReference type="EMBL" id="AK227449">
    <property type="protein sequence ID" value="BAE99452.1"/>
    <property type="molecule type" value="mRNA"/>
</dbReference>
<dbReference type="PIR" id="F84579">
    <property type="entry name" value="F84579"/>
</dbReference>
<dbReference type="RefSeq" id="NP_179557.1">
    <property type="nucleotide sequence ID" value="NM_127525.5"/>
</dbReference>
<dbReference type="SMR" id="O82210"/>
<dbReference type="BioGRID" id="1841">
    <property type="interactions" value="2"/>
</dbReference>
<dbReference type="FunCoup" id="O82210">
    <property type="interactions" value="3329"/>
</dbReference>
<dbReference type="IntAct" id="O82210">
    <property type="interactions" value="2"/>
</dbReference>
<dbReference type="STRING" id="3702.O82210"/>
<dbReference type="iPTMnet" id="O82210"/>
<dbReference type="PaxDb" id="3702-AT2G19670.1"/>
<dbReference type="ProteomicsDB" id="245054"/>
<dbReference type="EnsemblPlants" id="AT2G19670.1">
    <property type="protein sequence ID" value="AT2G19670.1"/>
    <property type="gene ID" value="AT2G19670"/>
</dbReference>
<dbReference type="GeneID" id="816486"/>
<dbReference type="Gramene" id="AT2G19670.1">
    <property type="protein sequence ID" value="AT2G19670.1"/>
    <property type="gene ID" value="AT2G19670"/>
</dbReference>
<dbReference type="KEGG" id="ath:AT2G19670"/>
<dbReference type="Araport" id="AT2G19670"/>
<dbReference type="TAIR" id="AT2G19670">
    <property type="gene designation" value="PRMT1A"/>
</dbReference>
<dbReference type="eggNOG" id="KOG1499">
    <property type="taxonomic scope" value="Eukaryota"/>
</dbReference>
<dbReference type="HOGENOM" id="CLU_017375_1_2_1"/>
<dbReference type="InParanoid" id="O82210"/>
<dbReference type="OMA" id="QRNDHIH"/>
<dbReference type="OrthoDB" id="7848332at2759"/>
<dbReference type="PhylomeDB" id="O82210"/>
<dbReference type="PRO" id="PR:O82210"/>
<dbReference type="Proteomes" id="UP000006548">
    <property type="component" value="Chromosome 2"/>
</dbReference>
<dbReference type="ExpressionAtlas" id="O82210">
    <property type="expression patterns" value="baseline and differential"/>
</dbReference>
<dbReference type="GO" id="GO:0005737">
    <property type="term" value="C:cytoplasm"/>
    <property type="evidence" value="ECO:0007669"/>
    <property type="project" value="UniProtKB-SubCell"/>
</dbReference>
<dbReference type="GO" id="GO:0005634">
    <property type="term" value="C:nucleus"/>
    <property type="evidence" value="ECO:0007669"/>
    <property type="project" value="UniProtKB-SubCell"/>
</dbReference>
<dbReference type="GO" id="GO:0016274">
    <property type="term" value="F:protein-arginine N-methyltransferase activity"/>
    <property type="evidence" value="ECO:0007669"/>
    <property type="project" value="InterPro"/>
</dbReference>
<dbReference type="GO" id="GO:0006325">
    <property type="term" value="P:chromatin organization"/>
    <property type="evidence" value="ECO:0007669"/>
    <property type="project" value="UniProtKB-KW"/>
</dbReference>
<dbReference type="GO" id="GO:0032259">
    <property type="term" value="P:methylation"/>
    <property type="evidence" value="ECO:0007669"/>
    <property type="project" value="UniProtKB-KW"/>
</dbReference>
<dbReference type="CDD" id="cd02440">
    <property type="entry name" value="AdoMet_MTases"/>
    <property type="match status" value="1"/>
</dbReference>
<dbReference type="FunFam" id="2.70.160.11:FF:000001">
    <property type="entry name" value="Blast:Protein arginine N-methyltransferase 1"/>
    <property type="match status" value="1"/>
</dbReference>
<dbReference type="FunFam" id="3.40.50.150:FF:000116">
    <property type="entry name" value="probable protein arginine N-methyltransferase 1"/>
    <property type="match status" value="1"/>
</dbReference>
<dbReference type="Gene3D" id="2.70.160.11">
    <property type="entry name" value="Hnrnp arginine n-methyltransferase1"/>
    <property type="match status" value="1"/>
</dbReference>
<dbReference type="Gene3D" id="3.40.50.150">
    <property type="entry name" value="Vaccinia Virus protein VP39"/>
    <property type="match status" value="1"/>
</dbReference>
<dbReference type="InterPro" id="IPR025799">
    <property type="entry name" value="Arg_MeTrfase"/>
</dbReference>
<dbReference type="InterPro" id="IPR041698">
    <property type="entry name" value="Methyltransf_25"/>
</dbReference>
<dbReference type="InterPro" id="IPR055135">
    <property type="entry name" value="PRMT_dom"/>
</dbReference>
<dbReference type="InterPro" id="IPR029063">
    <property type="entry name" value="SAM-dependent_MTases_sf"/>
</dbReference>
<dbReference type="PANTHER" id="PTHR11006">
    <property type="entry name" value="PROTEIN ARGININE N-METHYLTRANSFERASE"/>
    <property type="match status" value="1"/>
</dbReference>
<dbReference type="PANTHER" id="PTHR11006:SF103">
    <property type="entry name" value="PROTEIN ARGININE N-METHYLTRANSFERASE 1.2-RELATED"/>
    <property type="match status" value="1"/>
</dbReference>
<dbReference type="Pfam" id="PF13649">
    <property type="entry name" value="Methyltransf_25"/>
    <property type="match status" value="1"/>
</dbReference>
<dbReference type="Pfam" id="PF22528">
    <property type="entry name" value="PRMT_C"/>
    <property type="match status" value="1"/>
</dbReference>
<dbReference type="SUPFAM" id="SSF53335">
    <property type="entry name" value="S-adenosyl-L-methionine-dependent methyltransferases"/>
    <property type="match status" value="1"/>
</dbReference>
<dbReference type="PROSITE" id="PS51678">
    <property type="entry name" value="SAM_MT_PRMT"/>
    <property type="match status" value="1"/>
</dbReference>
<gene>
    <name type="primary">PRMT12</name>
    <name type="synonym">PRMT1.2</name>
    <name type="synonym">PRMT1A</name>
    <name type="ordered locus">At2g19670</name>
    <name type="ORF">F6F22.30</name>
</gene>
<evidence type="ECO:0000250" key="1"/>
<evidence type="ECO:0000255" key="2">
    <source>
        <dbReference type="PROSITE-ProRule" id="PRU01015"/>
    </source>
</evidence>
<evidence type="ECO:0000269" key="3">
    <source>
    </source>
</evidence>
<organism>
    <name type="scientific">Arabidopsis thaliana</name>
    <name type="common">Mouse-ear cress</name>
    <dbReference type="NCBI Taxonomy" id="3702"/>
    <lineage>
        <taxon>Eukaryota</taxon>
        <taxon>Viridiplantae</taxon>
        <taxon>Streptophyta</taxon>
        <taxon>Embryophyta</taxon>
        <taxon>Tracheophyta</taxon>
        <taxon>Spermatophyta</taxon>
        <taxon>Magnoliopsida</taxon>
        <taxon>eudicotyledons</taxon>
        <taxon>Gunneridae</taxon>
        <taxon>Pentapetalae</taxon>
        <taxon>rosids</taxon>
        <taxon>malvids</taxon>
        <taxon>Brassicales</taxon>
        <taxon>Brassicaceae</taxon>
        <taxon>Camelineae</taxon>
        <taxon>Arabidopsis</taxon>
    </lineage>
</organism>
<comment type="function">
    <text evidence="3">Methylates (mono and asymmetric dimethylation) the guanidino nitrogens of arginyl residues present in a glycine and arginine-rich domain. Type I arginine methyltransferase active on both histones and non-histone proteins. Mediates the methylation of MED36A.</text>
</comment>
<comment type="subunit">
    <text evidence="3">Interacts with FIB2 and PRMT11.</text>
</comment>
<comment type="subcellular location">
    <subcellularLocation>
        <location evidence="3">Nucleus</location>
    </subcellularLocation>
    <subcellularLocation>
        <location evidence="3">Cytoplasm</location>
    </subcellularLocation>
</comment>
<comment type="similarity">
    <text evidence="2">Belongs to the class I-like SAM-binding methyltransferase superfamily. Protein arginine N-methyltransferase family.</text>
</comment>
<keyword id="KW-0156">Chromatin regulator</keyword>
<keyword id="KW-0963">Cytoplasm</keyword>
<keyword id="KW-0489">Methyltransferase</keyword>
<keyword id="KW-0539">Nucleus</keyword>
<keyword id="KW-1185">Reference proteome</keyword>
<keyword id="KW-0949">S-adenosyl-L-methionine</keyword>
<keyword id="KW-0804">Transcription</keyword>
<keyword id="KW-0805">Transcription regulation</keyword>
<keyword id="KW-0808">Transferase</keyword>
<protein>
    <recommendedName>
        <fullName>Probable protein arginine N-methyltransferase 1.2</fullName>
        <shortName>AtPRMT12</shortName>
        <ecNumber>2.1.1.-</ecNumber>
    </recommendedName>
</protein>